<accession>Q6GG30</accession>
<feature type="chain" id="PRO_0000179428" description="Trigger factor">
    <location>
        <begin position="1"/>
        <end position="433"/>
    </location>
</feature>
<feature type="domain" description="PPIase FKBP-type" evidence="1">
    <location>
        <begin position="163"/>
        <end position="248"/>
    </location>
</feature>
<keyword id="KW-0131">Cell cycle</keyword>
<keyword id="KW-0132">Cell division</keyword>
<keyword id="KW-0143">Chaperone</keyword>
<keyword id="KW-0963">Cytoplasm</keyword>
<keyword id="KW-0413">Isomerase</keyword>
<keyword id="KW-0697">Rotamase</keyword>
<dbReference type="EC" id="5.2.1.8" evidence="1"/>
<dbReference type="EMBL" id="BX571856">
    <property type="protein sequence ID" value="CAG40746.1"/>
    <property type="molecule type" value="Genomic_DNA"/>
</dbReference>
<dbReference type="RefSeq" id="WP_000127572.1">
    <property type="nucleotide sequence ID" value="NC_002952.2"/>
</dbReference>
<dbReference type="SMR" id="Q6GG30"/>
<dbReference type="KEGG" id="sar:SAR1755"/>
<dbReference type="HOGENOM" id="CLU_033058_3_2_9"/>
<dbReference type="Proteomes" id="UP000000596">
    <property type="component" value="Chromosome"/>
</dbReference>
<dbReference type="GO" id="GO:0005737">
    <property type="term" value="C:cytoplasm"/>
    <property type="evidence" value="ECO:0007669"/>
    <property type="project" value="UniProtKB-SubCell"/>
</dbReference>
<dbReference type="GO" id="GO:0003755">
    <property type="term" value="F:peptidyl-prolyl cis-trans isomerase activity"/>
    <property type="evidence" value="ECO:0007669"/>
    <property type="project" value="UniProtKB-UniRule"/>
</dbReference>
<dbReference type="GO" id="GO:0044183">
    <property type="term" value="F:protein folding chaperone"/>
    <property type="evidence" value="ECO:0007669"/>
    <property type="project" value="TreeGrafter"/>
</dbReference>
<dbReference type="GO" id="GO:0043022">
    <property type="term" value="F:ribosome binding"/>
    <property type="evidence" value="ECO:0007669"/>
    <property type="project" value="TreeGrafter"/>
</dbReference>
<dbReference type="GO" id="GO:0051083">
    <property type="term" value="P:'de novo' cotranslational protein folding"/>
    <property type="evidence" value="ECO:0007669"/>
    <property type="project" value="TreeGrafter"/>
</dbReference>
<dbReference type="GO" id="GO:0051301">
    <property type="term" value="P:cell division"/>
    <property type="evidence" value="ECO:0007669"/>
    <property type="project" value="UniProtKB-KW"/>
</dbReference>
<dbReference type="GO" id="GO:0061077">
    <property type="term" value="P:chaperone-mediated protein folding"/>
    <property type="evidence" value="ECO:0007669"/>
    <property type="project" value="TreeGrafter"/>
</dbReference>
<dbReference type="GO" id="GO:0015031">
    <property type="term" value="P:protein transport"/>
    <property type="evidence" value="ECO:0007669"/>
    <property type="project" value="UniProtKB-UniRule"/>
</dbReference>
<dbReference type="GO" id="GO:0043335">
    <property type="term" value="P:protein unfolding"/>
    <property type="evidence" value="ECO:0007669"/>
    <property type="project" value="TreeGrafter"/>
</dbReference>
<dbReference type="FunFam" id="3.10.50.40:FF:000001">
    <property type="entry name" value="Trigger factor"/>
    <property type="match status" value="1"/>
</dbReference>
<dbReference type="FunFam" id="3.30.70.1050:FF:000002">
    <property type="entry name" value="Trigger factor"/>
    <property type="match status" value="1"/>
</dbReference>
<dbReference type="Gene3D" id="3.10.50.40">
    <property type="match status" value="1"/>
</dbReference>
<dbReference type="Gene3D" id="3.30.70.1050">
    <property type="entry name" value="Trigger factor ribosome-binding domain"/>
    <property type="match status" value="1"/>
</dbReference>
<dbReference type="Gene3D" id="1.10.3120.10">
    <property type="entry name" value="Trigger factor, C-terminal domain"/>
    <property type="match status" value="1"/>
</dbReference>
<dbReference type="HAMAP" id="MF_00303">
    <property type="entry name" value="Trigger_factor_Tig"/>
    <property type="match status" value="1"/>
</dbReference>
<dbReference type="InterPro" id="IPR046357">
    <property type="entry name" value="PPIase_dom_sf"/>
</dbReference>
<dbReference type="InterPro" id="IPR001179">
    <property type="entry name" value="PPIase_FKBP_dom"/>
</dbReference>
<dbReference type="InterPro" id="IPR005215">
    <property type="entry name" value="Trig_fac"/>
</dbReference>
<dbReference type="InterPro" id="IPR008880">
    <property type="entry name" value="Trigger_fac_C"/>
</dbReference>
<dbReference type="InterPro" id="IPR037041">
    <property type="entry name" value="Trigger_fac_C_sf"/>
</dbReference>
<dbReference type="InterPro" id="IPR008881">
    <property type="entry name" value="Trigger_fac_ribosome-bd_bac"/>
</dbReference>
<dbReference type="InterPro" id="IPR036611">
    <property type="entry name" value="Trigger_fac_ribosome-bd_sf"/>
</dbReference>
<dbReference type="InterPro" id="IPR027304">
    <property type="entry name" value="Trigger_fact/SurA_dom_sf"/>
</dbReference>
<dbReference type="NCBIfam" id="TIGR00115">
    <property type="entry name" value="tig"/>
    <property type="match status" value="1"/>
</dbReference>
<dbReference type="PANTHER" id="PTHR30560">
    <property type="entry name" value="TRIGGER FACTOR CHAPERONE AND PEPTIDYL-PROLYL CIS/TRANS ISOMERASE"/>
    <property type="match status" value="1"/>
</dbReference>
<dbReference type="PANTHER" id="PTHR30560:SF3">
    <property type="entry name" value="TRIGGER FACTOR-LIKE PROTEIN TIG, CHLOROPLASTIC"/>
    <property type="match status" value="1"/>
</dbReference>
<dbReference type="Pfam" id="PF00254">
    <property type="entry name" value="FKBP_C"/>
    <property type="match status" value="1"/>
</dbReference>
<dbReference type="Pfam" id="PF05698">
    <property type="entry name" value="Trigger_C"/>
    <property type="match status" value="1"/>
</dbReference>
<dbReference type="Pfam" id="PF05697">
    <property type="entry name" value="Trigger_N"/>
    <property type="match status" value="1"/>
</dbReference>
<dbReference type="PIRSF" id="PIRSF003095">
    <property type="entry name" value="Trigger_factor"/>
    <property type="match status" value="1"/>
</dbReference>
<dbReference type="SUPFAM" id="SSF54534">
    <property type="entry name" value="FKBP-like"/>
    <property type="match status" value="1"/>
</dbReference>
<dbReference type="SUPFAM" id="SSF109998">
    <property type="entry name" value="Triger factor/SurA peptide-binding domain-like"/>
    <property type="match status" value="1"/>
</dbReference>
<dbReference type="SUPFAM" id="SSF102735">
    <property type="entry name" value="Trigger factor ribosome-binding domain"/>
    <property type="match status" value="1"/>
</dbReference>
<dbReference type="PROSITE" id="PS50059">
    <property type="entry name" value="FKBP_PPIASE"/>
    <property type="match status" value="1"/>
</dbReference>
<name>TIG_STAAR</name>
<reference key="1">
    <citation type="journal article" date="2004" name="Proc. Natl. Acad. Sci. U.S.A.">
        <title>Complete genomes of two clinical Staphylococcus aureus strains: evidence for the rapid evolution of virulence and drug resistance.</title>
        <authorList>
            <person name="Holden M.T.G."/>
            <person name="Feil E.J."/>
            <person name="Lindsay J.A."/>
            <person name="Peacock S.J."/>
            <person name="Day N.P.J."/>
            <person name="Enright M.C."/>
            <person name="Foster T.J."/>
            <person name="Moore C.E."/>
            <person name="Hurst L."/>
            <person name="Atkin R."/>
            <person name="Barron A."/>
            <person name="Bason N."/>
            <person name="Bentley S.D."/>
            <person name="Chillingworth C."/>
            <person name="Chillingworth T."/>
            <person name="Churcher C."/>
            <person name="Clark L."/>
            <person name="Corton C."/>
            <person name="Cronin A."/>
            <person name="Doggett J."/>
            <person name="Dowd L."/>
            <person name="Feltwell T."/>
            <person name="Hance Z."/>
            <person name="Harris B."/>
            <person name="Hauser H."/>
            <person name="Holroyd S."/>
            <person name="Jagels K."/>
            <person name="James K.D."/>
            <person name="Lennard N."/>
            <person name="Line A."/>
            <person name="Mayes R."/>
            <person name="Moule S."/>
            <person name="Mungall K."/>
            <person name="Ormond D."/>
            <person name="Quail M.A."/>
            <person name="Rabbinowitsch E."/>
            <person name="Rutherford K.M."/>
            <person name="Sanders M."/>
            <person name="Sharp S."/>
            <person name="Simmonds M."/>
            <person name="Stevens K."/>
            <person name="Whitehead S."/>
            <person name="Barrell B.G."/>
            <person name="Spratt B.G."/>
            <person name="Parkhill J."/>
        </authorList>
    </citation>
    <scope>NUCLEOTIDE SEQUENCE [LARGE SCALE GENOMIC DNA]</scope>
    <source>
        <strain>MRSA252</strain>
    </source>
</reference>
<gene>
    <name evidence="1" type="primary">tig</name>
    <name type="ordered locus">SAR1755</name>
</gene>
<sequence length="433" mass="48595">MTATWEKKEGNEGLLTVTVPAEKVNKALDQAFKKVVKQINVPGFRKGKVPRPIFEQRFGVEALYQDAIDILLPDAYGEAIDETDIKPVAQPEVSVTQIEKGKDFIFEATVTVEPEVKLGDYKGLEIEKQETELSDDELQEAIDHSLGHLAEMVVKEDGVVENGDTVNIDFSGSVDGEEFEGGQAEGYDLEIGSGSFIPGFEEQLEGMKVDEEKDVVVTFPEEYHAEELAGKEATFKTKVNEIKFKEVPELTDEIANELDAEANTVDEYKENLRKRLAEQKATDAENVEKEEAITKATDNTTIDIPEAMVNTELDRMVSEFAQRIQQQGLDLQTYFQISGQDESQLREQMKDDAEQRVKTNLTLTAIAEAEKIEATDEDIDKELEKMSKQFNISVEDIKNTLGNTDIIKNDVRIQKVIDLLRDNAKFVEGTKED</sequence>
<protein>
    <recommendedName>
        <fullName evidence="1">Trigger factor</fullName>
        <shortName evidence="1">TF</shortName>
        <ecNumber evidence="1">5.2.1.8</ecNumber>
    </recommendedName>
    <alternativeName>
        <fullName evidence="1">PPIase</fullName>
    </alternativeName>
</protein>
<comment type="function">
    <text evidence="1">Involved in protein export. Acts as a chaperone by maintaining the newly synthesized protein in an open conformation. Functions as a peptidyl-prolyl cis-trans isomerase.</text>
</comment>
<comment type="catalytic activity">
    <reaction evidence="1">
        <text>[protein]-peptidylproline (omega=180) = [protein]-peptidylproline (omega=0)</text>
        <dbReference type="Rhea" id="RHEA:16237"/>
        <dbReference type="Rhea" id="RHEA-COMP:10747"/>
        <dbReference type="Rhea" id="RHEA-COMP:10748"/>
        <dbReference type="ChEBI" id="CHEBI:83833"/>
        <dbReference type="ChEBI" id="CHEBI:83834"/>
        <dbReference type="EC" id="5.2.1.8"/>
    </reaction>
</comment>
<comment type="subcellular location">
    <subcellularLocation>
        <location>Cytoplasm</location>
    </subcellularLocation>
    <text evidence="1">About half TF is bound to the ribosome near the polypeptide exit tunnel while the other half is free in the cytoplasm.</text>
</comment>
<comment type="domain">
    <text evidence="1">Consists of 3 domains; the N-terminus binds the ribosome, the middle domain has PPIase activity, while the C-terminus has intrinsic chaperone activity on its own.</text>
</comment>
<comment type="similarity">
    <text evidence="1">Belongs to the FKBP-type PPIase family. Tig subfamily.</text>
</comment>
<proteinExistence type="inferred from homology"/>
<evidence type="ECO:0000255" key="1">
    <source>
        <dbReference type="HAMAP-Rule" id="MF_00303"/>
    </source>
</evidence>
<organism>
    <name type="scientific">Staphylococcus aureus (strain MRSA252)</name>
    <dbReference type="NCBI Taxonomy" id="282458"/>
    <lineage>
        <taxon>Bacteria</taxon>
        <taxon>Bacillati</taxon>
        <taxon>Bacillota</taxon>
        <taxon>Bacilli</taxon>
        <taxon>Bacillales</taxon>
        <taxon>Staphylococcaceae</taxon>
        <taxon>Staphylococcus</taxon>
    </lineage>
</organism>